<organism>
    <name type="scientific">Pelodictyon phaeoclathratiforme (strain DSM 5477 / BU-1)</name>
    <dbReference type="NCBI Taxonomy" id="324925"/>
    <lineage>
        <taxon>Bacteria</taxon>
        <taxon>Pseudomonadati</taxon>
        <taxon>Chlorobiota</taxon>
        <taxon>Chlorobiia</taxon>
        <taxon>Chlorobiales</taxon>
        <taxon>Chlorobiaceae</taxon>
        <taxon>Chlorobium/Pelodictyon group</taxon>
        <taxon>Pelodictyon</taxon>
    </lineage>
</organism>
<dbReference type="EC" id="5.4.99.12" evidence="1"/>
<dbReference type="EMBL" id="CP001110">
    <property type="protein sequence ID" value="ACF43772.1"/>
    <property type="molecule type" value="Genomic_DNA"/>
</dbReference>
<dbReference type="RefSeq" id="WP_012508260.1">
    <property type="nucleotide sequence ID" value="NC_011060.1"/>
</dbReference>
<dbReference type="SMR" id="B4SA76"/>
<dbReference type="STRING" id="324925.Ppha_1523"/>
<dbReference type="KEGG" id="pph:Ppha_1523"/>
<dbReference type="eggNOG" id="COG0101">
    <property type="taxonomic scope" value="Bacteria"/>
</dbReference>
<dbReference type="HOGENOM" id="CLU_014673_0_2_10"/>
<dbReference type="OrthoDB" id="9811823at2"/>
<dbReference type="Proteomes" id="UP000002724">
    <property type="component" value="Chromosome"/>
</dbReference>
<dbReference type="GO" id="GO:0003723">
    <property type="term" value="F:RNA binding"/>
    <property type="evidence" value="ECO:0007669"/>
    <property type="project" value="InterPro"/>
</dbReference>
<dbReference type="GO" id="GO:0160147">
    <property type="term" value="F:tRNA pseudouridine(38-40) synthase activity"/>
    <property type="evidence" value="ECO:0007669"/>
    <property type="project" value="UniProtKB-EC"/>
</dbReference>
<dbReference type="GO" id="GO:0031119">
    <property type="term" value="P:tRNA pseudouridine synthesis"/>
    <property type="evidence" value="ECO:0007669"/>
    <property type="project" value="UniProtKB-UniRule"/>
</dbReference>
<dbReference type="CDD" id="cd02570">
    <property type="entry name" value="PseudoU_synth_EcTruA"/>
    <property type="match status" value="1"/>
</dbReference>
<dbReference type="FunFam" id="3.30.70.580:FF:000001">
    <property type="entry name" value="tRNA pseudouridine synthase A"/>
    <property type="match status" value="1"/>
</dbReference>
<dbReference type="Gene3D" id="3.30.70.660">
    <property type="entry name" value="Pseudouridine synthase I, catalytic domain, C-terminal subdomain"/>
    <property type="match status" value="1"/>
</dbReference>
<dbReference type="Gene3D" id="3.30.70.580">
    <property type="entry name" value="Pseudouridine synthase I, catalytic domain, N-terminal subdomain"/>
    <property type="match status" value="1"/>
</dbReference>
<dbReference type="HAMAP" id="MF_00171">
    <property type="entry name" value="TruA"/>
    <property type="match status" value="1"/>
</dbReference>
<dbReference type="InterPro" id="IPR020103">
    <property type="entry name" value="PsdUridine_synth_cat_dom_sf"/>
</dbReference>
<dbReference type="InterPro" id="IPR001406">
    <property type="entry name" value="PsdUridine_synth_TruA"/>
</dbReference>
<dbReference type="InterPro" id="IPR020097">
    <property type="entry name" value="PsdUridine_synth_TruA_a/b_dom"/>
</dbReference>
<dbReference type="InterPro" id="IPR020095">
    <property type="entry name" value="PsdUridine_synth_TruA_C"/>
</dbReference>
<dbReference type="InterPro" id="IPR020094">
    <property type="entry name" value="TruA/RsuA/RluB/E/F_N"/>
</dbReference>
<dbReference type="NCBIfam" id="TIGR00071">
    <property type="entry name" value="hisT_truA"/>
    <property type="match status" value="1"/>
</dbReference>
<dbReference type="PANTHER" id="PTHR11142">
    <property type="entry name" value="PSEUDOURIDYLATE SYNTHASE"/>
    <property type="match status" value="1"/>
</dbReference>
<dbReference type="PANTHER" id="PTHR11142:SF0">
    <property type="entry name" value="TRNA PSEUDOURIDINE SYNTHASE-LIKE 1"/>
    <property type="match status" value="1"/>
</dbReference>
<dbReference type="Pfam" id="PF01416">
    <property type="entry name" value="PseudoU_synth_1"/>
    <property type="match status" value="2"/>
</dbReference>
<dbReference type="PIRSF" id="PIRSF001430">
    <property type="entry name" value="tRNA_psdUrid_synth"/>
    <property type="match status" value="1"/>
</dbReference>
<dbReference type="SUPFAM" id="SSF55120">
    <property type="entry name" value="Pseudouridine synthase"/>
    <property type="match status" value="1"/>
</dbReference>
<feature type="chain" id="PRO_1000203697" description="tRNA pseudouridine synthase A">
    <location>
        <begin position="1"/>
        <end position="243"/>
    </location>
</feature>
<feature type="active site" description="Nucleophile" evidence="1">
    <location>
        <position position="53"/>
    </location>
</feature>
<feature type="binding site" evidence="1">
    <location>
        <position position="111"/>
    </location>
    <ligand>
        <name>substrate</name>
    </ligand>
</feature>
<keyword id="KW-0413">Isomerase</keyword>
<keyword id="KW-1185">Reference proteome</keyword>
<keyword id="KW-0819">tRNA processing</keyword>
<accession>B4SA76</accession>
<comment type="function">
    <text evidence="1">Formation of pseudouridine at positions 38, 39 and 40 in the anticodon stem and loop of transfer RNAs.</text>
</comment>
<comment type="catalytic activity">
    <reaction evidence="1">
        <text>uridine(38/39/40) in tRNA = pseudouridine(38/39/40) in tRNA</text>
        <dbReference type="Rhea" id="RHEA:22376"/>
        <dbReference type="Rhea" id="RHEA-COMP:10085"/>
        <dbReference type="Rhea" id="RHEA-COMP:10087"/>
        <dbReference type="ChEBI" id="CHEBI:65314"/>
        <dbReference type="ChEBI" id="CHEBI:65315"/>
        <dbReference type="EC" id="5.4.99.12"/>
    </reaction>
</comment>
<comment type="subunit">
    <text evidence="1">Homodimer.</text>
</comment>
<comment type="similarity">
    <text evidence="1">Belongs to the tRNA pseudouridine synthase TruA family.</text>
</comment>
<name>TRUA_PELPB</name>
<reference key="1">
    <citation type="submission" date="2008-06" db="EMBL/GenBank/DDBJ databases">
        <title>Complete sequence of Pelodictyon phaeoclathratiforme BU-1.</title>
        <authorList>
            <consortium name="US DOE Joint Genome Institute"/>
            <person name="Lucas S."/>
            <person name="Copeland A."/>
            <person name="Lapidus A."/>
            <person name="Glavina del Rio T."/>
            <person name="Dalin E."/>
            <person name="Tice H."/>
            <person name="Bruce D."/>
            <person name="Goodwin L."/>
            <person name="Pitluck S."/>
            <person name="Schmutz J."/>
            <person name="Larimer F."/>
            <person name="Land M."/>
            <person name="Hauser L."/>
            <person name="Kyrpides N."/>
            <person name="Mikhailova N."/>
            <person name="Liu Z."/>
            <person name="Li T."/>
            <person name="Zhao F."/>
            <person name="Overmann J."/>
            <person name="Bryant D.A."/>
            <person name="Richardson P."/>
        </authorList>
    </citation>
    <scope>NUCLEOTIDE SEQUENCE [LARGE SCALE GENOMIC DNA]</scope>
    <source>
        <strain>DSM 5477 / BU-1</strain>
    </source>
</reference>
<evidence type="ECO:0000255" key="1">
    <source>
        <dbReference type="HAMAP-Rule" id="MF_00171"/>
    </source>
</evidence>
<gene>
    <name evidence="1" type="primary">truA</name>
    <name type="ordered locus">Ppha_1523</name>
</gene>
<sequence length="243" mass="27070">MKNIRVTVEYDGTSFAGWQRQSGAIVTVQGEIEVALGKILQEKISLAAAGRTDKGVHARAQTANFFTASSLEPSRIVHSLNSLLPQTIRISNPEEVDADFHARHSAKERQYRYFLIEEPSAIYGRFAGCSFGKLDVAIMQQMAAILVGTHDFSAFSKEDRDNPGRICSVTACKWYPCKHYLVLRISADRFLRSMVRYLVDAMIRAGKGRLSVGDFCRMLETGVTTSQLNPALPAGLFLWDVLY</sequence>
<proteinExistence type="inferred from homology"/>
<protein>
    <recommendedName>
        <fullName evidence="1">tRNA pseudouridine synthase A</fullName>
        <ecNumber evidence="1">5.4.99.12</ecNumber>
    </recommendedName>
    <alternativeName>
        <fullName evidence="1">tRNA pseudouridine(38-40) synthase</fullName>
    </alternativeName>
    <alternativeName>
        <fullName evidence="1">tRNA pseudouridylate synthase I</fullName>
    </alternativeName>
    <alternativeName>
        <fullName evidence="1">tRNA-uridine isomerase I</fullName>
    </alternativeName>
</protein>